<geneLocation type="mitochondrion"/>
<protein>
    <recommendedName>
        <fullName>Cytochrome b</fullName>
    </recommendedName>
    <alternativeName>
        <fullName>Complex III subunit 3</fullName>
    </alternativeName>
    <alternativeName>
        <fullName>Complex III subunit III</fullName>
    </alternativeName>
    <alternativeName>
        <fullName>Cytochrome b-c1 complex subunit 3</fullName>
    </alternativeName>
    <alternativeName>
        <fullName>Ubiquinol-cytochrome-c reductase complex cytochrome b subunit</fullName>
    </alternativeName>
</protein>
<name>CYB_PTEMA</name>
<evidence type="ECO:0000250" key="1"/>
<evidence type="ECO:0000250" key="2">
    <source>
        <dbReference type="UniProtKB" id="P00157"/>
    </source>
</evidence>
<evidence type="ECO:0000255" key="3">
    <source>
        <dbReference type="PROSITE-ProRule" id="PRU00967"/>
    </source>
</evidence>
<evidence type="ECO:0000255" key="4">
    <source>
        <dbReference type="PROSITE-ProRule" id="PRU00968"/>
    </source>
</evidence>
<reference key="1">
    <citation type="journal article" date="2001" name="Mol. Phylogenet. Evol.">
        <title>Molecular systematics of the family Mormoopidae (Chiroptera) based on cytochrome b and recombination activating gene 2 sequences.</title>
        <authorList>
            <person name="Lewis-Oritt N."/>
            <person name="Porter C.A."/>
            <person name="Baker R.J."/>
        </authorList>
    </citation>
    <scope>NUCLEOTIDE SEQUENCE [GENOMIC DNA]</scope>
    <source>
        <strain>Isolate TK 11008</strain>
        <strain>Isolate TK 32171</strain>
    </source>
</reference>
<dbReference type="EMBL" id="AF338683">
    <property type="protein sequence ID" value="AAK21943.1"/>
    <property type="molecule type" value="Genomic_DNA"/>
</dbReference>
<dbReference type="EMBL" id="AF338684">
    <property type="protein sequence ID" value="AAK21944.1"/>
    <property type="molecule type" value="Genomic_DNA"/>
</dbReference>
<dbReference type="SMR" id="Q9B106"/>
<dbReference type="GO" id="GO:0005743">
    <property type="term" value="C:mitochondrial inner membrane"/>
    <property type="evidence" value="ECO:0007669"/>
    <property type="project" value="UniProtKB-SubCell"/>
</dbReference>
<dbReference type="GO" id="GO:0045275">
    <property type="term" value="C:respiratory chain complex III"/>
    <property type="evidence" value="ECO:0007669"/>
    <property type="project" value="InterPro"/>
</dbReference>
<dbReference type="GO" id="GO:0046872">
    <property type="term" value="F:metal ion binding"/>
    <property type="evidence" value="ECO:0007669"/>
    <property type="project" value="UniProtKB-KW"/>
</dbReference>
<dbReference type="GO" id="GO:0008121">
    <property type="term" value="F:ubiquinol-cytochrome-c reductase activity"/>
    <property type="evidence" value="ECO:0007669"/>
    <property type="project" value="InterPro"/>
</dbReference>
<dbReference type="GO" id="GO:0006122">
    <property type="term" value="P:mitochondrial electron transport, ubiquinol to cytochrome c"/>
    <property type="evidence" value="ECO:0007669"/>
    <property type="project" value="TreeGrafter"/>
</dbReference>
<dbReference type="CDD" id="cd00290">
    <property type="entry name" value="cytochrome_b_C"/>
    <property type="match status" value="1"/>
</dbReference>
<dbReference type="CDD" id="cd00284">
    <property type="entry name" value="Cytochrome_b_N"/>
    <property type="match status" value="1"/>
</dbReference>
<dbReference type="FunFam" id="1.20.810.10:FF:000002">
    <property type="entry name" value="Cytochrome b"/>
    <property type="match status" value="1"/>
</dbReference>
<dbReference type="Gene3D" id="1.20.810.10">
    <property type="entry name" value="Cytochrome Bc1 Complex, Chain C"/>
    <property type="match status" value="1"/>
</dbReference>
<dbReference type="InterPro" id="IPR005798">
    <property type="entry name" value="Cyt_b/b6_C"/>
</dbReference>
<dbReference type="InterPro" id="IPR036150">
    <property type="entry name" value="Cyt_b/b6_C_sf"/>
</dbReference>
<dbReference type="InterPro" id="IPR005797">
    <property type="entry name" value="Cyt_b/b6_N"/>
</dbReference>
<dbReference type="InterPro" id="IPR027387">
    <property type="entry name" value="Cytb/b6-like_sf"/>
</dbReference>
<dbReference type="InterPro" id="IPR030689">
    <property type="entry name" value="Cytochrome_b"/>
</dbReference>
<dbReference type="InterPro" id="IPR048260">
    <property type="entry name" value="Cytochrome_b_C_euk/bac"/>
</dbReference>
<dbReference type="InterPro" id="IPR048259">
    <property type="entry name" value="Cytochrome_b_N_euk/bac"/>
</dbReference>
<dbReference type="InterPro" id="IPR016174">
    <property type="entry name" value="Di-haem_cyt_TM"/>
</dbReference>
<dbReference type="PANTHER" id="PTHR19271">
    <property type="entry name" value="CYTOCHROME B"/>
    <property type="match status" value="1"/>
</dbReference>
<dbReference type="PANTHER" id="PTHR19271:SF16">
    <property type="entry name" value="CYTOCHROME B"/>
    <property type="match status" value="1"/>
</dbReference>
<dbReference type="Pfam" id="PF00032">
    <property type="entry name" value="Cytochrom_B_C"/>
    <property type="match status" value="1"/>
</dbReference>
<dbReference type="Pfam" id="PF00033">
    <property type="entry name" value="Cytochrome_B"/>
    <property type="match status" value="1"/>
</dbReference>
<dbReference type="PIRSF" id="PIRSF038885">
    <property type="entry name" value="COB"/>
    <property type="match status" value="1"/>
</dbReference>
<dbReference type="SUPFAM" id="SSF81648">
    <property type="entry name" value="a domain/subunit of cytochrome bc1 complex (Ubiquinol-cytochrome c reductase)"/>
    <property type="match status" value="1"/>
</dbReference>
<dbReference type="SUPFAM" id="SSF81342">
    <property type="entry name" value="Transmembrane di-heme cytochromes"/>
    <property type="match status" value="1"/>
</dbReference>
<dbReference type="PROSITE" id="PS51003">
    <property type="entry name" value="CYTB_CTER"/>
    <property type="match status" value="1"/>
</dbReference>
<dbReference type="PROSITE" id="PS51002">
    <property type="entry name" value="CYTB_NTER"/>
    <property type="match status" value="1"/>
</dbReference>
<keyword id="KW-0249">Electron transport</keyword>
<keyword id="KW-0349">Heme</keyword>
<keyword id="KW-0408">Iron</keyword>
<keyword id="KW-0472">Membrane</keyword>
<keyword id="KW-0479">Metal-binding</keyword>
<keyword id="KW-0496">Mitochondrion</keyword>
<keyword id="KW-0999">Mitochondrion inner membrane</keyword>
<keyword id="KW-0679">Respiratory chain</keyword>
<keyword id="KW-0812">Transmembrane</keyword>
<keyword id="KW-1133">Transmembrane helix</keyword>
<keyword id="KW-0813">Transport</keyword>
<keyword id="KW-0830">Ubiquinone</keyword>
<proteinExistence type="inferred from homology"/>
<accession>Q9B106</accession>
<feature type="chain" id="PRO_0000061462" description="Cytochrome b">
    <location>
        <begin position="1"/>
        <end position="379"/>
    </location>
</feature>
<feature type="transmembrane region" description="Helical" evidence="2">
    <location>
        <begin position="33"/>
        <end position="53"/>
    </location>
</feature>
<feature type="transmembrane region" description="Helical" evidence="2">
    <location>
        <begin position="77"/>
        <end position="98"/>
    </location>
</feature>
<feature type="transmembrane region" description="Helical" evidence="2">
    <location>
        <begin position="113"/>
        <end position="133"/>
    </location>
</feature>
<feature type="transmembrane region" description="Helical" evidence="2">
    <location>
        <begin position="178"/>
        <end position="198"/>
    </location>
</feature>
<feature type="transmembrane region" description="Helical" evidence="2">
    <location>
        <begin position="226"/>
        <end position="246"/>
    </location>
</feature>
<feature type="transmembrane region" description="Helical" evidence="2">
    <location>
        <begin position="288"/>
        <end position="308"/>
    </location>
</feature>
<feature type="transmembrane region" description="Helical" evidence="2">
    <location>
        <begin position="320"/>
        <end position="340"/>
    </location>
</feature>
<feature type="transmembrane region" description="Helical" evidence="2">
    <location>
        <begin position="347"/>
        <end position="367"/>
    </location>
</feature>
<feature type="binding site" description="axial binding residue" evidence="2">
    <location>
        <position position="83"/>
    </location>
    <ligand>
        <name>heme b</name>
        <dbReference type="ChEBI" id="CHEBI:60344"/>
        <label>b562</label>
    </ligand>
    <ligandPart>
        <name>Fe</name>
        <dbReference type="ChEBI" id="CHEBI:18248"/>
    </ligandPart>
</feature>
<feature type="binding site" description="axial binding residue" evidence="2">
    <location>
        <position position="97"/>
    </location>
    <ligand>
        <name>heme b</name>
        <dbReference type="ChEBI" id="CHEBI:60344"/>
        <label>b566</label>
    </ligand>
    <ligandPart>
        <name>Fe</name>
        <dbReference type="ChEBI" id="CHEBI:18248"/>
    </ligandPart>
</feature>
<feature type="binding site" description="axial binding residue" evidence="2">
    <location>
        <position position="182"/>
    </location>
    <ligand>
        <name>heme b</name>
        <dbReference type="ChEBI" id="CHEBI:60344"/>
        <label>b562</label>
    </ligand>
    <ligandPart>
        <name>Fe</name>
        <dbReference type="ChEBI" id="CHEBI:18248"/>
    </ligandPart>
</feature>
<feature type="binding site" description="axial binding residue" evidence="2">
    <location>
        <position position="196"/>
    </location>
    <ligand>
        <name>heme b</name>
        <dbReference type="ChEBI" id="CHEBI:60344"/>
        <label>b566</label>
    </ligand>
    <ligandPart>
        <name>Fe</name>
        <dbReference type="ChEBI" id="CHEBI:18248"/>
    </ligandPart>
</feature>
<feature type="binding site" evidence="2">
    <location>
        <position position="201"/>
    </location>
    <ligand>
        <name>a ubiquinone</name>
        <dbReference type="ChEBI" id="CHEBI:16389"/>
    </ligand>
</feature>
<organism>
    <name type="scientific">Pteronotus macleayii</name>
    <name type="common">MacLeay's mustached bat</name>
    <dbReference type="NCBI Taxonomy" id="118853"/>
    <lineage>
        <taxon>Eukaryota</taxon>
        <taxon>Metazoa</taxon>
        <taxon>Chordata</taxon>
        <taxon>Craniata</taxon>
        <taxon>Vertebrata</taxon>
        <taxon>Euteleostomi</taxon>
        <taxon>Mammalia</taxon>
        <taxon>Eutheria</taxon>
        <taxon>Laurasiatheria</taxon>
        <taxon>Chiroptera</taxon>
        <taxon>Yangochiroptera</taxon>
        <taxon>Mormoopidae</taxon>
        <taxon>Pteronotus</taxon>
    </lineage>
</organism>
<comment type="function">
    <text evidence="2">Component of the ubiquinol-cytochrome c reductase complex (complex III or cytochrome b-c1 complex) that is part of the mitochondrial respiratory chain. The b-c1 complex mediates electron transfer from ubiquinol to cytochrome c. Contributes to the generation of a proton gradient across the mitochondrial membrane that is then used for ATP synthesis.</text>
</comment>
<comment type="cofactor">
    <cofactor evidence="2">
        <name>heme b</name>
        <dbReference type="ChEBI" id="CHEBI:60344"/>
    </cofactor>
    <text evidence="2">Binds 2 heme b groups non-covalently.</text>
</comment>
<comment type="subunit">
    <text evidence="2">The cytochrome bc1 complex contains 11 subunits: 3 respiratory subunits (MT-CYB, CYC1 and UQCRFS1), 2 core proteins (UQCRC1 and UQCRC2) and 6 low-molecular weight proteins (UQCRH/QCR6, UQCRB/QCR7, UQCRQ/QCR8, UQCR10/QCR9, UQCR11/QCR10 and a cleavage product of UQCRFS1). This cytochrome bc1 complex then forms a dimer.</text>
</comment>
<comment type="subcellular location">
    <subcellularLocation>
        <location evidence="2">Mitochondrion inner membrane</location>
        <topology evidence="2">Multi-pass membrane protein</topology>
    </subcellularLocation>
</comment>
<comment type="miscellaneous">
    <text evidence="1">Heme 1 (or BL or b562) is low-potential and absorbs at about 562 nm, and heme 2 (or BH or b566) is high-potential and absorbs at about 566 nm.</text>
</comment>
<comment type="similarity">
    <text evidence="3 4">Belongs to the cytochrome b family.</text>
</comment>
<comment type="caution">
    <text evidence="2">The full-length protein contains only eight transmembrane helices, not nine as predicted by bioinformatics tools.</text>
</comment>
<sequence length="379" mass="42585">MTNIRKTHPLLKIINDSLVDLPVPSSVSSWWNFGSLLAACLAVQILTGLFLAMHYTSDTATAFNSVTHICRDVNYGWILRYLHANGASMFFICLYIHVGRGLYYGSYMYSETWNIGILLLFAVMATAFMGYVLPWGQMSFWGATVITNLLSAIPYIGTELVQWIWGGFSVDKATLTRFFAFHFLLPFIIAALVVVHLLFLHETGSSNPTGIPSDPDMVPFHPYHTIKDILGILMMLTMLSMLVLFSPDLLGDPDNYIPANPLNTPPHIKPEWYFLFAYAILRSIPNKLGGVLALVLSILILAVIPLLHTSKQRTMMFRPLSQCLFWLLAADLLTLTWIGGQPVEHPYIIIGQAASVLYFTIILLLMPLTSIMENHLLKW</sequence>
<gene>
    <name type="primary">MT-CYB</name>
    <name type="synonym">COB</name>
    <name type="synonym">CYTB</name>
    <name type="synonym">MTCYB</name>
</gene>